<reference key="1">
    <citation type="journal article" date="2001" name="Proc. Natl. Acad. Sci. U.S.A.">
        <title>Genome sequence of an industrial microorganism Streptomyces avermitilis: deducing the ability of producing secondary metabolites.</title>
        <authorList>
            <person name="Omura S."/>
            <person name="Ikeda H."/>
            <person name="Ishikawa J."/>
            <person name="Hanamoto A."/>
            <person name="Takahashi C."/>
            <person name="Shinose M."/>
            <person name="Takahashi Y."/>
            <person name="Horikawa H."/>
            <person name="Nakazawa H."/>
            <person name="Osonoe T."/>
            <person name="Kikuchi H."/>
            <person name="Shiba T."/>
            <person name="Sakaki Y."/>
            <person name="Hattori M."/>
        </authorList>
    </citation>
    <scope>NUCLEOTIDE SEQUENCE [LARGE SCALE GENOMIC DNA]</scope>
    <source>
        <strain>ATCC 31267 / DSM 46492 / JCM 5070 / NBRC 14893 / NCIMB 12804 / NRRL 8165 / MA-4680</strain>
    </source>
</reference>
<reference key="2">
    <citation type="journal article" date="2003" name="Nat. Biotechnol.">
        <title>Complete genome sequence and comparative analysis of the industrial microorganism Streptomyces avermitilis.</title>
        <authorList>
            <person name="Ikeda H."/>
            <person name="Ishikawa J."/>
            <person name="Hanamoto A."/>
            <person name="Shinose M."/>
            <person name="Kikuchi H."/>
            <person name="Shiba T."/>
            <person name="Sakaki Y."/>
            <person name="Hattori M."/>
            <person name="Omura S."/>
        </authorList>
    </citation>
    <scope>NUCLEOTIDE SEQUENCE [LARGE SCALE GENOMIC DNA]</scope>
    <source>
        <strain>ATCC 31267 / DSM 46492 / JCM 5070 / NBRC 14893 / NCIMB 12804 / NRRL 8165 / MA-4680</strain>
    </source>
</reference>
<protein>
    <recommendedName>
        <fullName evidence="1">Single-stranded DNA-binding protein 2</fullName>
        <shortName evidence="1">SSB 2</shortName>
    </recommendedName>
</protein>
<keyword id="KW-0238">DNA-binding</keyword>
<keyword id="KW-1185">Reference proteome</keyword>
<evidence type="ECO:0000255" key="1">
    <source>
        <dbReference type="HAMAP-Rule" id="MF_00984"/>
    </source>
</evidence>
<evidence type="ECO:0000256" key="2">
    <source>
        <dbReference type="SAM" id="MobiDB-lite"/>
    </source>
</evidence>
<dbReference type="EMBL" id="BA000030">
    <property type="protein sequence ID" value="BAC73077.1"/>
    <property type="molecule type" value="Genomic_DNA"/>
</dbReference>
<dbReference type="RefSeq" id="WP_010986768.1">
    <property type="nucleotide sequence ID" value="NZ_JZJK01000066.1"/>
</dbReference>
<dbReference type="SMR" id="Q82CI4"/>
<dbReference type="GeneID" id="41542457"/>
<dbReference type="KEGG" id="sma:SAVERM_5365"/>
<dbReference type="eggNOG" id="COG0629">
    <property type="taxonomic scope" value="Bacteria"/>
</dbReference>
<dbReference type="HOGENOM" id="CLU_078758_1_3_11"/>
<dbReference type="OrthoDB" id="4427276at2"/>
<dbReference type="Proteomes" id="UP000000428">
    <property type="component" value="Chromosome"/>
</dbReference>
<dbReference type="GO" id="GO:0003697">
    <property type="term" value="F:single-stranded DNA binding"/>
    <property type="evidence" value="ECO:0007669"/>
    <property type="project" value="UniProtKB-UniRule"/>
</dbReference>
<dbReference type="GO" id="GO:0006260">
    <property type="term" value="P:DNA replication"/>
    <property type="evidence" value="ECO:0007669"/>
    <property type="project" value="InterPro"/>
</dbReference>
<dbReference type="CDD" id="cd04496">
    <property type="entry name" value="SSB_OBF"/>
    <property type="match status" value="1"/>
</dbReference>
<dbReference type="Gene3D" id="2.40.50.140">
    <property type="entry name" value="Nucleic acid-binding proteins"/>
    <property type="match status" value="1"/>
</dbReference>
<dbReference type="HAMAP" id="MF_00984">
    <property type="entry name" value="SSB"/>
    <property type="match status" value="1"/>
</dbReference>
<dbReference type="InterPro" id="IPR012340">
    <property type="entry name" value="NA-bd_OB-fold"/>
</dbReference>
<dbReference type="InterPro" id="IPR000424">
    <property type="entry name" value="Primosome_PriB/ssb"/>
</dbReference>
<dbReference type="InterPro" id="IPR011344">
    <property type="entry name" value="ssDNA-bd"/>
</dbReference>
<dbReference type="Pfam" id="PF00436">
    <property type="entry name" value="SSB"/>
    <property type="match status" value="1"/>
</dbReference>
<dbReference type="PIRSF" id="PIRSF002070">
    <property type="entry name" value="SSB"/>
    <property type="match status" value="1"/>
</dbReference>
<dbReference type="SUPFAM" id="SSF50249">
    <property type="entry name" value="Nucleic acid-binding proteins"/>
    <property type="match status" value="1"/>
</dbReference>
<dbReference type="PROSITE" id="PS50935">
    <property type="entry name" value="SSB"/>
    <property type="match status" value="1"/>
</dbReference>
<name>SSB2_STRAW</name>
<sequence length="158" mass="17112">MNETIVCVVGNVATRPVYRELASGASARFRLAVTSRYWDREKSEWKDGHTNFFTVWANRALATNVGASLSVGDPVVVQGRLKVRTEAREGQNWTSADIDALAVGHDLSRGTSAFRRPSAKDGEAGVSPAARPEPNWETEPGSQPSVEHQPQPEPAGVT</sequence>
<proteinExistence type="inferred from homology"/>
<comment type="subunit">
    <text evidence="1">Homotetramer.</text>
</comment>
<accession>Q82CI4</accession>
<feature type="chain" id="PRO_0000096114" description="Single-stranded DNA-binding protein 2">
    <location>
        <begin position="1"/>
        <end position="158"/>
    </location>
</feature>
<feature type="domain" description="SSB" evidence="1">
    <location>
        <begin position="1"/>
        <end position="107"/>
    </location>
</feature>
<feature type="region of interest" description="Disordered" evidence="2">
    <location>
        <begin position="109"/>
        <end position="158"/>
    </location>
</feature>
<organism>
    <name type="scientific">Streptomyces avermitilis (strain ATCC 31267 / DSM 46492 / JCM 5070 / NBRC 14893 / NCIMB 12804 / NRRL 8165 / MA-4680)</name>
    <dbReference type="NCBI Taxonomy" id="227882"/>
    <lineage>
        <taxon>Bacteria</taxon>
        <taxon>Bacillati</taxon>
        <taxon>Actinomycetota</taxon>
        <taxon>Actinomycetes</taxon>
        <taxon>Kitasatosporales</taxon>
        <taxon>Streptomycetaceae</taxon>
        <taxon>Streptomyces</taxon>
    </lineage>
</organism>
<gene>
    <name type="primary">ssb2</name>
    <name type="ordered locus">SAV_5365</name>
</gene>